<sequence length="226" mass="24960">MKAIKIAIDGPASSGKSTVAKIIAKNLGYTYLDTGAMYRSATYIALTHGYTGKEVALILEELEKNPISFKKAKDGSQLVFLGDEDVTLAIRQNDVTNNVSWVSALPEIREELVHQQRRIAQAGGIIMDGRDIGTVVLPDAELKIFLVASVEERAERRYKENLEKGIESDFETLKEEIAARDYKDSHRKVSPLKAAEDALIFDTTGVSIDGVVQFIQEKAEKIVDMS</sequence>
<keyword id="KW-0067">ATP-binding</keyword>
<keyword id="KW-0963">Cytoplasm</keyword>
<keyword id="KW-0418">Kinase</keyword>
<keyword id="KW-0547">Nucleotide-binding</keyword>
<keyword id="KW-0808">Transferase</keyword>
<gene>
    <name evidence="1" type="primary">cmk</name>
    <name type="ordered locus">SPs1317</name>
</gene>
<evidence type="ECO:0000255" key="1">
    <source>
        <dbReference type="HAMAP-Rule" id="MF_00238"/>
    </source>
</evidence>
<feature type="chain" id="PRO_0000411307" description="Cytidylate kinase">
    <location>
        <begin position="1"/>
        <end position="226"/>
    </location>
</feature>
<feature type="binding site" evidence="1">
    <location>
        <begin position="10"/>
        <end position="18"/>
    </location>
    <ligand>
        <name>ATP</name>
        <dbReference type="ChEBI" id="CHEBI:30616"/>
    </ligand>
</feature>
<reference key="1">
    <citation type="journal article" date="2003" name="Genome Res.">
        <title>Genome sequence of an M3 strain of Streptococcus pyogenes reveals a large-scale genomic rearrangement in invasive strains and new insights into phage evolution.</title>
        <authorList>
            <person name="Nakagawa I."/>
            <person name="Kurokawa K."/>
            <person name="Yamashita A."/>
            <person name="Nakata M."/>
            <person name="Tomiyasu Y."/>
            <person name="Okahashi N."/>
            <person name="Kawabata S."/>
            <person name="Yamazaki K."/>
            <person name="Shiba T."/>
            <person name="Yasunaga T."/>
            <person name="Hayashi H."/>
            <person name="Hattori M."/>
            <person name="Hamada S."/>
        </authorList>
    </citation>
    <scope>NUCLEOTIDE SEQUENCE [LARGE SCALE GENOMIC DNA]</scope>
    <source>
        <strain>SSI-1</strain>
    </source>
</reference>
<organism>
    <name type="scientific">Streptococcus pyogenes serotype M3 (strain SSI-1)</name>
    <dbReference type="NCBI Taxonomy" id="193567"/>
    <lineage>
        <taxon>Bacteria</taxon>
        <taxon>Bacillati</taxon>
        <taxon>Bacillota</taxon>
        <taxon>Bacilli</taxon>
        <taxon>Lactobacillales</taxon>
        <taxon>Streptococcaceae</taxon>
        <taxon>Streptococcus</taxon>
    </lineage>
</organism>
<comment type="catalytic activity">
    <reaction evidence="1">
        <text>CMP + ATP = CDP + ADP</text>
        <dbReference type="Rhea" id="RHEA:11600"/>
        <dbReference type="ChEBI" id="CHEBI:30616"/>
        <dbReference type="ChEBI" id="CHEBI:58069"/>
        <dbReference type="ChEBI" id="CHEBI:60377"/>
        <dbReference type="ChEBI" id="CHEBI:456216"/>
        <dbReference type="EC" id="2.7.4.25"/>
    </reaction>
</comment>
<comment type="catalytic activity">
    <reaction evidence="1">
        <text>dCMP + ATP = dCDP + ADP</text>
        <dbReference type="Rhea" id="RHEA:25094"/>
        <dbReference type="ChEBI" id="CHEBI:30616"/>
        <dbReference type="ChEBI" id="CHEBI:57566"/>
        <dbReference type="ChEBI" id="CHEBI:58593"/>
        <dbReference type="ChEBI" id="CHEBI:456216"/>
        <dbReference type="EC" id="2.7.4.25"/>
    </reaction>
</comment>
<comment type="subcellular location">
    <subcellularLocation>
        <location evidence="1">Cytoplasm</location>
    </subcellularLocation>
</comment>
<comment type="similarity">
    <text evidence="1">Belongs to the cytidylate kinase family. Type 1 subfamily.</text>
</comment>
<protein>
    <recommendedName>
        <fullName evidence="1">Cytidylate kinase</fullName>
        <shortName evidence="1">CK</shortName>
        <ecNumber evidence="1">2.7.4.25</ecNumber>
    </recommendedName>
    <alternativeName>
        <fullName evidence="1">Cytidine monophosphate kinase</fullName>
        <shortName evidence="1">CMP kinase</shortName>
    </alternativeName>
</protein>
<dbReference type="EC" id="2.7.4.25" evidence="1"/>
<dbReference type="EMBL" id="BA000034">
    <property type="protein sequence ID" value="BAC64412.1"/>
    <property type="molecule type" value="Genomic_DNA"/>
</dbReference>
<dbReference type="RefSeq" id="WP_009880409.1">
    <property type="nucleotide sequence ID" value="NC_004606.1"/>
</dbReference>
<dbReference type="SMR" id="P0DA39"/>
<dbReference type="KEGG" id="sps:SPs1317"/>
<dbReference type="HOGENOM" id="CLU_079959_0_2_9"/>
<dbReference type="GO" id="GO:0005829">
    <property type="term" value="C:cytosol"/>
    <property type="evidence" value="ECO:0007669"/>
    <property type="project" value="TreeGrafter"/>
</dbReference>
<dbReference type="GO" id="GO:0005524">
    <property type="term" value="F:ATP binding"/>
    <property type="evidence" value="ECO:0007669"/>
    <property type="project" value="UniProtKB-UniRule"/>
</dbReference>
<dbReference type="GO" id="GO:0036430">
    <property type="term" value="F:CMP kinase activity"/>
    <property type="evidence" value="ECO:0007669"/>
    <property type="project" value="RHEA"/>
</dbReference>
<dbReference type="GO" id="GO:0036431">
    <property type="term" value="F:dCMP kinase activity"/>
    <property type="evidence" value="ECO:0007669"/>
    <property type="project" value="RHEA"/>
</dbReference>
<dbReference type="GO" id="GO:0015949">
    <property type="term" value="P:nucleobase-containing small molecule interconversion"/>
    <property type="evidence" value="ECO:0007669"/>
    <property type="project" value="TreeGrafter"/>
</dbReference>
<dbReference type="GO" id="GO:0006220">
    <property type="term" value="P:pyrimidine nucleotide metabolic process"/>
    <property type="evidence" value="ECO:0007669"/>
    <property type="project" value="UniProtKB-UniRule"/>
</dbReference>
<dbReference type="CDD" id="cd02020">
    <property type="entry name" value="CMPK"/>
    <property type="match status" value="1"/>
</dbReference>
<dbReference type="FunFam" id="3.40.50.300:FF:000484">
    <property type="entry name" value="Cytidylate kinase"/>
    <property type="match status" value="1"/>
</dbReference>
<dbReference type="Gene3D" id="3.40.50.300">
    <property type="entry name" value="P-loop containing nucleotide triphosphate hydrolases"/>
    <property type="match status" value="1"/>
</dbReference>
<dbReference type="HAMAP" id="MF_00238">
    <property type="entry name" value="Cytidyl_kinase_type1"/>
    <property type="match status" value="1"/>
</dbReference>
<dbReference type="InterPro" id="IPR003136">
    <property type="entry name" value="Cytidylate_kin"/>
</dbReference>
<dbReference type="InterPro" id="IPR011994">
    <property type="entry name" value="Cytidylate_kinase_dom"/>
</dbReference>
<dbReference type="InterPro" id="IPR027417">
    <property type="entry name" value="P-loop_NTPase"/>
</dbReference>
<dbReference type="NCBIfam" id="TIGR00017">
    <property type="entry name" value="cmk"/>
    <property type="match status" value="1"/>
</dbReference>
<dbReference type="PANTHER" id="PTHR21299:SF2">
    <property type="entry name" value="CYTIDYLATE KINASE"/>
    <property type="match status" value="1"/>
</dbReference>
<dbReference type="PANTHER" id="PTHR21299">
    <property type="entry name" value="CYTIDYLATE KINASE/PANTOATE-BETA-ALANINE LIGASE"/>
    <property type="match status" value="1"/>
</dbReference>
<dbReference type="Pfam" id="PF02224">
    <property type="entry name" value="Cytidylate_kin"/>
    <property type="match status" value="1"/>
</dbReference>
<dbReference type="SUPFAM" id="SSF52540">
    <property type="entry name" value="P-loop containing nucleoside triphosphate hydrolases"/>
    <property type="match status" value="1"/>
</dbReference>
<name>KCY_STRPQ</name>
<accession>P0DA39</accession>
<accession>Q8K7Z9</accession>
<proteinExistence type="inferred from homology"/>